<sequence length="138" mass="15308">MDTERSSEICGNVPDVTLSTPKGKVFSTPKGAHKRTPYSGHTKVNSSFKSPVQTSSTSPAKPEEEIEELKKRRAKLDSEIALLEKDGIRVDELEQHIDLLHEYNDIKDIGQSLVGRIAALRGVTTRDLYGQFGLELDD</sequence>
<name>SWI5_SALSA</name>
<evidence type="ECO:0000250" key="1"/>
<evidence type="ECO:0000255" key="2"/>
<evidence type="ECO:0000256" key="3">
    <source>
        <dbReference type="SAM" id="MobiDB-lite"/>
    </source>
</evidence>
<evidence type="ECO:0000305" key="4"/>
<gene>
    <name type="primary">swi5</name>
    <name type="synonym">sae3</name>
</gene>
<protein>
    <recommendedName>
        <fullName>DNA repair protein SWI5 homolog</fullName>
    </recommendedName>
    <alternativeName>
        <fullName>Protein SAE3 homolog</fullName>
    </alternativeName>
</protein>
<dbReference type="EMBL" id="BT046470">
    <property type="protein sequence ID" value="ACI66271.1"/>
    <property type="molecule type" value="mRNA"/>
</dbReference>
<dbReference type="RefSeq" id="NP_001134113.1">
    <property type="nucleotide sequence ID" value="NM_001140641.1"/>
</dbReference>
<dbReference type="SMR" id="B5X601"/>
<dbReference type="STRING" id="8030.ENSSSAP00000021694"/>
<dbReference type="PaxDb" id="8030-ENSSSAP00000021694"/>
<dbReference type="Ensembl" id="ENSSSAT00070053964">
    <property type="protein sequence ID" value="ENSSSAP00070051780"/>
    <property type="gene ID" value="ENSSSAG00070033689"/>
</dbReference>
<dbReference type="GeneID" id="100195612"/>
<dbReference type="KEGG" id="sasa:100195612"/>
<dbReference type="CTD" id="375757"/>
<dbReference type="OMA" id="VSSNCHA"/>
<dbReference type="OrthoDB" id="531577at7898"/>
<dbReference type="Proteomes" id="UP000087266">
    <property type="component" value="Chromosome ssa01"/>
</dbReference>
<dbReference type="Bgee" id="ENSSSAG00000010881">
    <property type="expression patterns" value="Expressed in testis and 25 other cell types or tissues"/>
</dbReference>
<dbReference type="GO" id="GO:0005634">
    <property type="term" value="C:nucleus"/>
    <property type="evidence" value="ECO:0000250"/>
    <property type="project" value="UniProtKB"/>
</dbReference>
<dbReference type="GO" id="GO:0032798">
    <property type="term" value="C:Swi5-Sfr1 complex"/>
    <property type="evidence" value="ECO:0000250"/>
    <property type="project" value="UniProtKB"/>
</dbReference>
<dbReference type="GO" id="GO:0034974">
    <property type="term" value="C:Swi5-Swi2 complex"/>
    <property type="evidence" value="ECO:0007669"/>
    <property type="project" value="TreeGrafter"/>
</dbReference>
<dbReference type="GO" id="GO:0000724">
    <property type="term" value="P:double-strand break repair via homologous recombination"/>
    <property type="evidence" value="ECO:0000250"/>
    <property type="project" value="UniProtKB"/>
</dbReference>
<dbReference type="FunFam" id="1.20.5.170:FF:000056">
    <property type="entry name" value="DNA repair protein SWI5 homolog"/>
    <property type="match status" value="1"/>
</dbReference>
<dbReference type="Gene3D" id="1.20.5.170">
    <property type="match status" value="1"/>
</dbReference>
<dbReference type="InterPro" id="IPR010760">
    <property type="entry name" value="DNA-repair_Swi5"/>
</dbReference>
<dbReference type="PANTHER" id="PTHR28529">
    <property type="entry name" value="DNA REPAIR PROTEIN SWI5 HOMOLOG"/>
    <property type="match status" value="1"/>
</dbReference>
<dbReference type="PANTHER" id="PTHR28529:SF2">
    <property type="entry name" value="DNA REPAIR PROTEIN SWI5 HOMOLOG"/>
    <property type="match status" value="1"/>
</dbReference>
<dbReference type="Pfam" id="PF07061">
    <property type="entry name" value="Swi5"/>
    <property type="match status" value="1"/>
</dbReference>
<reference key="1">
    <citation type="journal article" date="2010" name="BMC Genomics">
        <title>Salmo salar and Esox lucius full-length cDNA sequences reveal changes in evolutionary pressures on a post-tetraploidization genome.</title>
        <authorList>
            <person name="Leong J.S."/>
            <person name="Jantzen S.G."/>
            <person name="von Schalburg K.R."/>
            <person name="Cooper G.A."/>
            <person name="Messmer A.M."/>
            <person name="Liao N.Y."/>
            <person name="Munro S."/>
            <person name="Moore R."/>
            <person name="Holt R.A."/>
            <person name="Jones S.J."/>
            <person name="Davidson W.S."/>
            <person name="Koop B.F."/>
        </authorList>
    </citation>
    <scope>NUCLEOTIDE SEQUENCE [LARGE SCALE MRNA]</scope>
    <source>
        <tissue>Head kidney</tissue>
    </source>
</reference>
<feature type="chain" id="PRO_0000406980" description="DNA repair protein SWI5 homolog">
    <location>
        <begin position="1"/>
        <end position="138"/>
    </location>
</feature>
<feature type="region of interest" description="Disordered" evidence="3">
    <location>
        <begin position="21"/>
        <end position="66"/>
    </location>
</feature>
<feature type="coiled-coil region" evidence="2">
    <location>
        <begin position="60"/>
        <end position="87"/>
    </location>
</feature>
<feature type="compositionally biased region" description="Polar residues" evidence="3">
    <location>
        <begin position="42"/>
        <end position="59"/>
    </location>
</feature>
<comment type="function">
    <text evidence="1">Component of the swi5-sfr1 complex, a complex required for double-strand break repair via homologous recombination.</text>
</comment>
<comment type="subunit">
    <text evidence="1">Component of the swi5-sfr1 complex.</text>
</comment>
<comment type="subcellular location">
    <subcellularLocation>
        <location evidence="1">Nucleus</location>
    </subcellularLocation>
</comment>
<comment type="similarity">
    <text evidence="4">Belongs to the SWI5/SAE3 family.</text>
</comment>
<organism>
    <name type="scientific">Salmo salar</name>
    <name type="common">Atlantic salmon</name>
    <dbReference type="NCBI Taxonomy" id="8030"/>
    <lineage>
        <taxon>Eukaryota</taxon>
        <taxon>Metazoa</taxon>
        <taxon>Chordata</taxon>
        <taxon>Craniata</taxon>
        <taxon>Vertebrata</taxon>
        <taxon>Euteleostomi</taxon>
        <taxon>Actinopterygii</taxon>
        <taxon>Neopterygii</taxon>
        <taxon>Teleostei</taxon>
        <taxon>Protacanthopterygii</taxon>
        <taxon>Salmoniformes</taxon>
        <taxon>Salmonidae</taxon>
        <taxon>Salmoninae</taxon>
        <taxon>Salmo</taxon>
    </lineage>
</organism>
<accession>B5X601</accession>
<proteinExistence type="evidence at transcript level"/>
<keyword id="KW-0175">Coiled coil</keyword>
<keyword id="KW-0227">DNA damage</keyword>
<keyword id="KW-0234">DNA repair</keyword>
<keyword id="KW-0539">Nucleus</keyword>
<keyword id="KW-1185">Reference proteome</keyword>